<comment type="similarity">
    <text evidence="2">Belongs to the 4-oxalocrotonate tautomerase family.</text>
</comment>
<sequence length="60" mass="6747">MPFVRIDLFEGRTLEQKKALAKEVTEAVVRNTGAPQSAVHVIINDMPEGTYFPQGEMRTK</sequence>
<proteinExistence type="inferred from homology"/>
<reference key="1">
    <citation type="journal article" date="2001" name="Science">
        <title>Complete genome sequence of a virulent isolate of Streptococcus pneumoniae.</title>
        <authorList>
            <person name="Tettelin H."/>
            <person name="Nelson K.E."/>
            <person name="Paulsen I.T."/>
            <person name="Eisen J.A."/>
            <person name="Read T.D."/>
            <person name="Peterson S.N."/>
            <person name="Heidelberg J.F."/>
            <person name="DeBoy R.T."/>
            <person name="Haft D.H."/>
            <person name="Dodson R.J."/>
            <person name="Durkin A.S."/>
            <person name="Gwinn M.L."/>
            <person name="Kolonay J.F."/>
            <person name="Nelson W.C."/>
            <person name="Peterson J.D."/>
            <person name="Umayam L.A."/>
            <person name="White O."/>
            <person name="Salzberg S.L."/>
            <person name="Lewis M.R."/>
            <person name="Radune D."/>
            <person name="Holtzapple E.K."/>
            <person name="Khouri H.M."/>
            <person name="Wolf A.M."/>
            <person name="Utterback T.R."/>
            <person name="Hansen C.L."/>
            <person name="McDonald L.A."/>
            <person name="Feldblyum T.V."/>
            <person name="Angiuoli S.V."/>
            <person name="Dickinson T."/>
            <person name="Hickey E.K."/>
            <person name="Holt I.E."/>
            <person name="Loftus B.J."/>
            <person name="Yang F."/>
            <person name="Smith H.O."/>
            <person name="Venter J.C."/>
            <person name="Dougherty B.A."/>
            <person name="Morrison D.A."/>
            <person name="Hollingshead S.K."/>
            <person name="Fraser C.M."/>
        </authorList>
    </citation>
    <scope>NUCLEOTIDE SEQUENCE [LARGE SCALE GENOMIC DNA]</scope>
    <source>
        <strain>ATCC BAA-334 / TIGR4</strain>
    </source>
</reference>
<protein>
    <recommendedName>
        <fullName>Probable tautomerase SP_1017</fullName>
        <ecNumber>5.3.2.-</ecNumber>
    </recommendedName>
</protein>
<dbReference type="EC" id="5.3.2.-"/>
<dbReference type="EMBL" id="AE005672">
    <property type="protein sequence ID" value="AAK75132.1"/>
    <property type="molecule type" value="Genomic_DNA"/>
</dbReference>
<dbReference type="PIR" id="C95117">
    <property type="entry name" value="C95117"/>
</dbReference>
<dbReference type="RefSeq" id="WP_001117401.1">
    <property type="nucleotide sequence ID" value="NZ_CP155539.1"/>
</dbReference>
<dbReference type="SMR" id="P67530"/>
<dbReference type="PaxDb" id="170187-SP_1017"/>
<dbReference type="EnsemblBacteria" id="AAK75132">
    <property type="protein sequence ID" value="AAK75132"/>
    <property type="gene ID" value="SP_1017"/>
</dbReference>
<dbReference type="KEGG" id="spn:SP_1017"/>
<dbReference type="eggNOG" id="COG1942">
    <property type="taxonomic scope" value="Bacteria"/>
</dbReference>
<dbReference type="BioCyc" id="SPNE170187:G1FZB-1047-MONOMER"/>
<dbReference type="Proteomes" id="UP000000585">
    <property type="component" value="Chromosome"/>
</dbReference>
<dbReference type="GO" id="GO:0016853">
    <property type="term" value="F:isomerase activity"/>
    <property type="evidence" value="ECO:0007669"/>
    <property type="project" value="UniProtKB-KW"/>
</dbReference>
<dbReference type="Gene3D" id="3.30.429.10">
    <property type="entry name" value="Macrophage Migration Inhibitory Factor"/>
    <property type="match status" value="1"/>
</dbReference>
<dbReference type="InterPro" id="IPR004370">
    <property type="entry name" value="4-OT-like_dom"/>
</dbReference>
<dbReference type="InterPro" id="IPR014347">
    <property type="entry name" value="Tautomerase/MIF_sf"/>
</dbReference>
<dbReference type="NCBIfam" id="NF002571">
    <property type="entry name" value="PRK02220.1"/>
    <property type="match status" value="1"/>
</dbReference>
<dbReference type="NCBIfam" id="NF002622">
    <property type="entry name" value="PRK02289.1"/>
    <property type="match status" value="1"/>
</dbReference>
<dbReference type="PANTHER" id="PTHR35530:SF1">
    <property type="entry name" value="2-HYDROXYMUCONATE TAUTOMERASE"/>
    <property type="match status" value="1"/>
</dbReference>
<dbReference type="PANTHER" id="PTHR35530">
    <property type="entry name" value="TAUTOMERASE-RELATED"/>
    <property type="match status" value="1"/>
</dbReference>
<dbReference type="Pfam" id="PF01361">
    <property type="entry name" value="Tautomerase"/>
    <property type="match status" value="1"/>
</dbReference>
<dbReference type="SUPFAM" id="SSF55331">
    <property type="entry name" value="Tautomerase/MIF"/>
    <property type="match status" value="1"/>
</dbReference>
<accession>P67530</accession>
<accession>Q8DPZ7</accession>
<accession>Q97R23</accession>
<organism>
    <name type="scientific">Streptococcus pneumoniae serotype 4 (strain ATCC BAA-334 / TIGR4)</name>
    <dbReference type="NCBI Taxonomy" id="170187"/>
    <lineage>
        <taxon>Bacteria</taxon>
        <taxon>Bacillati</taxon>
        <taxon>Bacillota</taxon>
        <taxon>Bacilli</taxon>
        <taxon>Lactobacillales</taxon>
        <taxon>Streptococcaceae</taxon>
        <taxon>Streptococcus</taxon>
    </lineage>
</organism>
<gene>
    <name type="ordered locus">SP_1017</name>
</gene>
<name>Y1017_STRPN</name>
<feature type="initiator methionine" description="Removed" evidence="1">
    <location>
        <position position="1"/>
    </location>
</feature>
<feature type="chain" id="PRO_0000209553" description="Probable tautomerase SP_1017">
    <location>
        <begin position="2"/>
        <end position="60"/>
    </location>
</feature>
<feature type="active site" description="Proton acceptor; via imino nitrogen" evidence="1">
    <location>
        <position position="2"/>
    </location>
</feature>
<keyword id="KW-0413">Isomerase</keyword>
<keyword id="KW-1185">Reference proteome</keyword>
<evidence type="ECO:0000250" key="1"/>
<evidence type="ECO:0000305" key="2"/>